<accession>Q0ABF0</accession>
<proteinExistence type="inferred from homology"/>
<sequence length="331" mass="36511">MQGTFRDFLKPRTVDIQEQGERRAKIVLEPLERGFGHTLGNALRRVLLSSMPGSAVVQAEIEGVEHEYSSMEGVQEDVVDILLNLKSLAVRMHDRDEAELTVSVQGPGPVTAGDIQTAHDVEVKNPELLICTLTKAVAFNAKLMVARGRGYEAATQRDGDEDRVIGRLQLDASYSPVKRVAYTVESARVEQRTNLDKLVLDVETNGVLEPEEAVRFAAGLLRDQLSVFVDLEGGEFEAEQEEQEPDVDPILLRPIDELELTVRSANCLKAESIHYVGDLVQRTEVELLKTPNLGKKSLTEIKETLASHGLSLGMRLENWPPAGLGEDRVVG</sequence>
<protein>
    <recommendedName>
        <fullName evidence="1">DNA-directed RNA polymerase subunit alpha</fullName>
        <shortName evidence="1">RNAP subunit alpha</shortName>
        <ecNumber evidence="1">2.7.7.6</ecNumber>
    </recommendedName>
    <alternativeName>
        <fullName evidence="1">RNA polymerase subunit alpha</fullName>
    </alternativeName>
    <alternativeName>
        <fullName evidence="1">Transcriptase subunit alpha</fullName>
    </alternativeName>
</protein>
<reference key="1">
    <citation type="submission" date="2006-08" db="EMBL/GenBank/DDBJ databases">
        <title>Complete sequence of Alkalilimnicola ehrilichei MLHE-1.</title>
        <authorList>
            <person name="Copeland A."/>
            <person name="Lucas S."/>
            <person name="Lapidus A."/>
            <person name="Barry K."/>
            <person name="Detter J.C."/>
            <person name="Glavina del Rio T."/>
            <person name="Hammon N."/>
            <person name="Israni S."/>
            <person name="Dalin E."/>
            <person name="Tice H."/>
            <person name="Pitluck S."/>
            <person name="Sims D."/>
            <person name="Brettin T."/>
            <person name="Bruce D."/>
            <person name="Han C."/>
            <person name="Tapia R."/>
            <person name="Gilna P."/>
            <person name="Schmutz J."/>
            <person name="Larimer F."/>
            <person name="Land M."/>
            <person name="Hauser L."/>
            <person name="Kyrpides N."/>
            <person name="Mikhailova N."/>
            <person name="Oremland R.S."/>
            <person name="Hoeft S.E."/>
            <person name="Switzer-Blum J."/>
            <person name="Kulp T."/>
            <person name="King G."/>
            <person name="Tabita R."/>
            <person name="Witte B."/>
            <person name="Santini J.M."/>
            <person name="Basu P."/>
            <person name="Hollibaugh J.T."/>
            <person name="Xie G."/>
            <person name="Stolz J.F."/>
            <person name="Richardson P."/>
        </authorList>
    </citation>
    <scope>NUCLEOTIDE SEQUENCE [LARGE SCALE GENOMIC DNA]</scope>
    <source>
        <strain>ATCC BAA-1101 / DSM 17681 / MLHE-1</strain>
    </source>
</reference>
<evidence type="ECO:0000255" key="1">
    <source>
        <dbReference type="HAMAP-Rule" id="MF_00059"/>
    </source>
</evidence>
<gene>
    <name evidence="1" type="primary">rpoA</name>
    <name type="ordered locus">Mlg_0483</name>
</gene>
<organism>
    <name type="scientific">Alkalilimnicola ehrlichii (strain ATCC BAA-1101 / DSM 17681 / MLHE-1)</name>
    <dbReference type="NCBI Taxonomy" id="187272"/>
    <lineage>
        <taxon>Bacteria</taxon>
        <taxon>Pseudomonadati</taxon>
        <taxon>Pseudomonadota</taxon>
        <taxon>Gammaproteobacteria</taxon>
        <taxon>Chromatiales</taxon>
        <taxon>Ectothiorhodospiraceae</taxon>
        <taxon>Alkalilimnicola</taxon>
    </lineage>
</organism>
<dbReference type="EC" id="2.7.7.6" evidence="1"/>
<dbReference type="EMBL" id="CP000453">
    <property type="protein sequence ID" value="ABI55837.1"/>
    <property type="molecule type" value="Genomic_DNA"/>
</dbReference>
<dbReference type="RefSeq" id="WP_011628232.1">
    <property type="nucleotide sequence ID" value="NC_008340.1"/>
</dbReference>
<dbReference type="SMR" id="Q0ABF0"/>
<dbReference type="KEGG" id="aeh:Mlg_0483"/>
<dbReference type="eggNOG" id="COG0202">
    <property type="taxonomic scope" value="Bacteria"/>
</dbReference>
<dbReference type="HOGENOM" id="CLU_053084_0_0_6"/>
<dbReference type="OrthoDB" id="9805706at2"/>
<dbReference type="Proteomes" id="UP000001962">
    <property type="component" value="Chromosome"/>
</dbReference>
<dbReference type="GO" id="GO:0005737">
    <property type="term" value="C:cytoplasm"/>
    <property type="evidence" value="ECO:0007669"/>
    <property type="project" value="UniProtKB-ARBA"/>
</dbReference>
<dbReference type="GO" id="GO:0000428">
    <property type="term" value="C:DNA-directed RNA polymerase complex"/>
    <property type="evidence" value="ECO:0007669"/>
    <property type="project" value="UniProtKB-KW"/>
</dbReference>
<dbReference type="GO" id="GO:0003677">
    <property type="term" value="F:DNA binding"/>
    <property type="evidence" value="ECO:0007669"/>
    <property type="project" value="UniProtKB-UniRule"/>
</dbReference>
<dbReference type="GO" id="GO:0003899">
    <property type="term" value="F:DNA-directed RNA polymerase activity"/>
    <property type="evidence" value="ECO:0007669"/>
    <property type="project" value="UniProtKB-UniRule"/>
</dbReference>
<dbReference type="GO" id="GO:0046983">
    <property type="term" value="F:protein dimerization activity"/>
    <property type="evidence" value="ECO:0007669"/>
    <property type="project" value="InterPro"/>
</dbReference>
<dbReference type="GO" id="GO:0006351">
    <property type="term" value="P:DNA-templated transcription"/>
    <property type="evidence" value="ECO:0007669"/>
    <property type="project" value="UniProtKB-UniRule"/>
</dbReference>
<dbReference type="CDD" id="cd06928">
    <property type="entry name" value="RNAP_alpha_NTD"/>
    <property type="match status" value="1"/>
</dbReference>
<dbReference type="FunFam" id="1.10.150.20:FF:000001">
    <property type="entry name" value="DNA-directed RNA polymerase subunit alpha"/>
    <property type="match status" value="1"/>
</dbReference>
<dbReference type="FunFam" id="2.170.120.12:FF:000001">
    <property type="entry name" value="DNA-directed RNA polymerase subunit alpha"/>
    <property type="match status" value="1"/>
</dbReference>
<dbReference type="Gene3D" id="1.10.150.20">
    <property type="entry name" value="5' to 3' exonuclease, C-terminal subdomain"/>
    <property type="match status" value="1"/>
</dbReference>
<dbReference type="Gene3D" id="2.170.120.12">
    <property type="entry name" value="DNA-directed RNA polymerase, insert domain"/>
    <property type="match status" value="1"/>
</dbReference>
<dbReference type="Gene3D" id="3.30.1360.10">
    <property type="entry name" value="RNA polymerase, RBP11-like subunit"/>
    <property type="match status" value="1"/>
</dbReference>
<dbReference type="HAMAP" id="MF_00059">
    <property type="entry name" value="RNApol_bact_RpoA"/>
    <property type="match status" value="1"/>
</dbReference>
<dbReference type="InterPro" id="IPR011262">
    <property type="entry name" value="DNA-dir_RNA_pol_insert"/>
</dbReference>
<dbReference type="InterPro" id="IPR011263">
    <property type="entry name" value="DNA-dir_RNA_pol_RpoA/D/Rpb3"/>
</dbReference>
<dbReference type="InterPro" id="IPR011773">
    <property type="entry name" value="DNA-dir_RpoA"/>
</dbReference>
<dbReference type="InterPro" id="IPR036603">
    <property type="entry name" value="RBP11-like"/>
</dbReference>
<dbReference type="InterPro" id="IPR011260">
    <property type="entry name" value="RNAP_asu_C"/>
</dbReference>
<dbReference type="InterPro" id="IPR036643">
    <property type="entry name" value="RNApol_insert_sf"/>
</dbReference>
<dbReference type="NCBIfam" id="NF003513">
    <property type="entry name" value="PRK05182.1-2"/>
    <property type="match status" value="1"/>
</dbReference>
<dbReference type="NCBIfam" id="NF003519">
    <property type="entry name" value="PRK05182.2-5"/>
    <property type="match status" value="1"/>
</dbReference>
<dbReference type="NCBIfam" id="TIGR02027">
    <property type="entry name" value="rpoA"/>
    <property type="match status" value="1"/>
</dbReference>
<dbReference type="Pfam" id="PF01000">
    <property type="entry name" value="RNA_pol_A_bac"/>
    <property type="match status" value="1"/>
</dbReference>
<dbReference type="Pfam" id="PF03118">
    <property type="entry name" value="RNA_pol_A_CTD"/>
    <property type="match status" value="1"/>
</dbReference>
<dbReference type="Pfam" id="PF01193">
    <property type="entry name" value="RNA_pol_L"/>
    <property type="match status" value="1"/>
</dbReference>
<dbReference type="SMART" id="SM00662">
    <property type="entry name" value="RPOLD"/>
    <property type="match status" value="1"/>
</dbReference>
<dbReference type="SUPFAM" id="SSF47789">
    <property type="entry name" value="C-terminal domain of RNA polymerase alpha subunit"/>
    <property type="match status" value="1"/>
</dbReference>
<dbReference type="SUPFAM" id="SSF56553">
    <property type="entry name" value="Insert subdomain of RNA polymerase alpha subunit"/>
    <property type="match status" value="1"/>
</dbReference>
<dbReference type="SUPFAM" id="SSF55257">
    <property type="entry name" value="RBP11-like subunits of RNA polymerase"/>
    <property type="match status" value="1"/>
</dbReference>
<keyword id="KW-0240">DNA-directed RNA polymerase</keyword>
<keyword id="KW-0548">Nucleotidyltransferase</keyword>
<keyword id="KW-1185">Reference proteome</keyword>
<keyword id="KW-0804">Transcription</keyword>
<keyword id="KW-0808">Transferase</keyword>
<comment type="function">
    <text evidence="1">DNA-dependent RNA polymerase catalyzes the transcription of DNA into RNA using the four ribonucleoside triphosphates as substrates.</text>
</comment>
<comment type="catalytic activity">
    <reaction evidence="1">
        <text>RNA(n) + a ribonucleoside 5'-triphosphate = RNA(n+1) + diphosphate</text>
        <dbReference type="Rhea" id="RHEA:21248"/>
        <dbReference type="Rhea" id="RHEA-COMP:14527"/>
        <dbReference type="Rhea" id="RHEA-COMP:17342"/>
        <dbReference type="ChEBI" id="CHEBI:33019"/>
        <dbReference type="ChEBI" id="CHEBI:61557"/>
        <dbReference type="ChEBI" id="CHEBI:140395"/>
        <dbReference type="EC" id="2.7.7.6"/>
    </reaction>
</comment>
<comment type="subunit">
    <text evidence="1">Homodimer. The RNAP catalytic core consists of 2 alpha, 1 beta, 1 beta' and 1 omega subunit. When a sigma factor is associated with the core the holoenzyme is formed, which can initiate transcription.</text>
</comment>
<comment type="domain">
    <text evidence="1">The N-terminal domain is essential for RNAP assembly and basal transcription, whereas the C-terminal domain is involved in interaction with transcriptional regulators and with upstream promoter elements.</text>
</comment>
<comment type="similarity">
    <text evidence="1">Belongs to the RNA polymerase alpha chain family.</text>
</comment>
<name>RPOA_ALKEH</name>
<feature type="chain" id="PRO_0000264478" description="DNA-directed RNA polymerase subunit alpha">
    <location>
        <begin position="1"/>
        <end position="331"/>
    </location>
</feature>
<feature type="region of interest" description="Alpha N-terminal domain (alpha-NTD)" evidence="1">
    <location>
        <begin position="1"/>
        <end position="232"/>
    </location>
</feature>
<feature type="region of interest" description="Alpha C-terminal domain (alpha-CTD)" evidence="1">
    <location>
        <begin position="247"/>
        <end position="331"/>
    </location>
</feature>